<reference key="1">
    <citation type="submission" date="2006-10" db="EMBL/GenBank/DDBJ databases">
        <title>Complete sequence of Methanosaeta thermophila PT.</title>
        <authorList>
            <consortium name="US DOE Joint Genome Institute"/>
            <person name="Copeland A."/>
            <person name="Lucas S."/>
            <person name="Lapidus A."/>
            <person name="Barry K."/>
            <person name="Detter J.C."/>
            <person name="Glavina del Rio T."/>
            <person name="Hammon N."/>
            <person name="Israni S."/>
            <person name="Pitluck S."/>
            <person name="Chain P."/>
            <person name="Malfatti S."/>
            <person name="Shin M."/>
            <person name="Vergez L."/>
            <person name="Schmutz J."/>
            <person name="Larimer F."/>
            <person name="Land M."/>
            <person name="Hauser L."/>
            <person name="Kyrpides N."/>
            <person name="Kim E."/>
            <person name="Smith K.S."/>
            <person name="Ingram-Smith C."/>
            <person name="Richardson P."/>
        </authorList>
    </citation>
    <scope>NUCLEOTIDE SEQUENCE [LARGE SCALE GENOMIC DNA]</scope>
    <source>
        <strain>DSM 6194 / JCM 14653 / NBRC 101360 / PT</strain>
    </source>
</reference>
<sequence length="143" mass="16445">MRGTMTRVMATGTFDILHPGHLLYLERSRALGDELVVVVARDINVKHKPRPVVPEDQRLRMVSALKMVDMAVLGSVTDIFEPVRALRPDIITLGYDQYMDENWLEGELRKRGLMARVVRISEREPCELCSSRQIVEKILKERC</sequence>
<protein>
    <recommendedName>
        <fullName evidence="1">FAD synthase</fullName>
        <ecNumber evidence="1">2.7.7.2</ecNumber>
    </recommendedName>
    <alternativeName>
        <fullName evidence="1">FMN adenylyltransferase</fullName>
    </alternativeName>
    <alternativeName>
        <fullName evidence="1">Flavin adenine dinucleotide synthase</fullName>
    </alternativeName>
</protein>
<organism>
    <name type="scientific">Methanothrix thermoacetophila (strain DSM 6194 / JCM 14653 / NBRC 101360 / PT)</name>
    <name type="common">Methanosaeta thermophila</name>
    <dbReference type="NCBI Taxonomy" id="349307"/>
    <lineage>
        <taxon>Archaea</taxon>
        <taxon>Methanobacteriati</taxon>
        <taxon>Methanobacteriota</taxon>
        <taxon>Stenosarchaea group</taxon>
        <taxon>Methanomicrobia</taxon>
        <taxon>Methanotrichales</taxon>
        <taxon>Methanotrichaceae</taxon>
        <taxon>Methanothrix</taxon>
    </lineage>
</organism>
<evidence type="ECO:0000255" key="1">
    <source>
        <dbReference type="HAMAP-Rule" id="MF_02115"/>
    </source>
</evidence>
<feature type="chain" id="PRO_0000406267" description="FAD synthase">
    <location>
        <begin position="1"/>
        <end position="143"/>
    </location>
</feature>
<feature type="binding site" evidence="1">
    <location>
        <begin position="13"/>
        <end position="14"/>
    </location>
    <ligand>
        <name>ATP</name>
        <dbReference type="ChEBI" id="CHEBI:30616"/>
    </ligand>
</feature>
<feature type="binding site" evidence="1">
    <location>
        <begin position="18"/>
        <end position="21"/>
    </location>
    <ligand>
        <name>ATP</name>
        <dbReference type="ChEBI" id="CHEBI:30616"/>
    </ligand>
</feature>
<feature type="binding site" evidence="1">
    <location>
        <position position="96"/>
    </location>
    <ligand>
        <name>ATP</name>
        <dbReference type="ChEBI" id="CHEBI:30616"/>
    </ligand>
</feature>
<gene>
    <name evidence="1" type="primary">ribL</name>
    <name type="ordered locus">Mthe_0791</name>
</gene>
<name>RIBL_METTP</name>
<comment type="function">
    <text evidence="1">Catalyzes the transfer of the AMP portion of ATP to flavin mononucleotide (FMN) to produce flavin adenine dinucleotide (FAD) coenzyme.</text>
</comment>
<comment type="catalytic activity">
    <reaction evidence="1">
        <text>FMN + ATP + H(+) = FAD + diphosphate</text>
        <dbReference type="Rhea" id="RHEA:17237"/>
        <dbReference type="ChEBI" id="CHEBI:15378"/>
        <dbReference type="ChEBI" id="CHEBI:30616"/>
        <dbReference type="ChEBI" id="CHEBI:33019"/>
        <dbReference type="ChEBI" id="CHEBI:57692"/>
        <dbReference type="ChEBI" id="CHEBI:58210"/>
        <dbReference type="EC" id="2.7.7.2"/>
    </reaction>
</comment>
<comment type="cofactor">
    <cofactor evidence="1">
        <name>a divalent metal cation</name>
        <dbReference type="ChEBI" id="CHEBI:60240"/>
    </cofactor>
</comment>
<comment type="pathway">
    <text evidence="1">Cofactor biosynthesis; FAD biosynthesis; FAD from FMN: step 1/1.</text>
</comment>
<comment type="subunit">
    <text evidence="1">Homodimer.</text>
</comment>
<comment type="similarity">
    <text evidence="1">Belongs to the archaeal FAD synthase family.</text>
</comment>
<accession>A0B7A6</accession>
<proteinExistence type="inferred from homology"/>
<dbReference type="EC" id="2.7.7.2" evidence="1"/>
<dbReference type="EMBL" id="CP000477">
    <property type="protein sequence ID" value="ABK14580.1"/>
    <property type="molecule type" value="Genomic_DNA"/>
</dbReference>
<dbReference type="SMR" id="A0B7A6"/>
<dbReference type="STRING" id="349307.Mthe_0791"/>
<dbReference type="KEGG" id="mtp:Mthe_0791"/>
<dbReference type="HOGENOM" id="CLU_034585_2_1_2"/>
<dbReference type="OrthoDB" id="1912at2157"/>
<dbReference type="UniPathway" id="UPA00277">
    <property type="reaction ID" value="UER00407"/>
</dbReference>
<dbReference type="Proteomes" id="UP000000674">
    <property type="component" value="Chromosome"/>
</dbReference>
<dbReference type="GO" id="GO:0005524">
    <property type="term" value="F:ATP binding"/>
    <property type="evidence" value="ECO:0007669"/>
    <property type="project" value="UniProtKB-UniRule"/>
</dbReference>
<dbReference type="GO" id="GO:0003919">
    <property type="term" value="F:FMN adenylyltransferase activity"/>
    <property type="evidence" value="ECO:0007669"/>
    <property type="project" value="UniProtKB-UniRule"/>
</dbReference>
<dbReference type="GO" id="GO:0006747">
    <property type="term" value="P:FAD biosynthetic process"/>
    <property type="evidence" value="ECO:0007669"/>
    <property type="project" value="UniProtKB-UniRule"/>
</dbReference>
<dbReference type="GO" id="GO:0046444">
    <property type="term" value="P:FMN metabolic process"/>
    <property type="evidence" value="ECO:0007669"/>
    <property type="project" value="UniProtKB-UniRule"/>
</dbReference>
<dbReference type="CDD" id="cd02170">
    <property type="entry name" value="cytidylyltransferase"/>
    <property type="match status" value="1"/>
</dbReference>
<dbReference type="Gene3D" id="3.40.50.620">
    <property type="entry name" value="HUPs"/>
    <property type="match status" value="1"/>
</dbReference>
<dbReference type="HAMAP" id="MF_02115">
    <property type="entry name" value="FAD_synth_arch"/>
    <property type="match status" value="1"/>
</dbReference>
<dbReference type="InterPro" id="IPR050385">
    <property type="entry name" value="Archaeal_FAD_synthase"/>
</dbReference>
<dbReference type="InterPro" id="IPR004821">
    <property type="entry name" value="Cyt_trans-like"/>
</dbReference>
<dbReference type="InterPro" id="IPR024902">
    <property type="entry name" value="FAD_synth_RibL"/>
</dbReference>
<dbReference type="InterPro" id="IPR014729">
    <property type="entry name" value="Rossmann-like_a/b/a_fold"/>
</dbReference>
<dbReference type="NCBIfam" id="TIGR00125">
    <property type="entry name" value="cyt_tran_rel"/>
    <property type="match status" value="1"/>
</dbReference>
<dbReference type="PANTHER" id="PTHR43793">
    <property type="entry name" value="FAD SYNTHASE"/>
    <property type="match status" value="1"/>
</dbReference>
<dbReference type="PANTHER" id="PTHR43793:SF1">
    <property type="entry name" value="FAD SYNTHASE"/>
    <property type="match status" value="1"/>
</dbReference>
<dbReference type="Pfam" id="PF01467">
    <property type="entry name" value="CTP_transf_like"/>
    <property type="match status" value="1"/>
</dbReference>
<dbReference type="SUPFAM" id="SSF52374">
    <property type="entry name" value="Nucleotidylyl transferase"/>
    <property type="match status" value="1"/>
</dbReference>
<keyword id="KW-0067">ATP-binding</keyword>
<keyword id="KW-0274">FAD</keyword>
<keyword id="KW-0285">Flavoprotein</keyword>
<keyword id="KW-0288">FMN</keyword>
<keyword id="KW-0547">Nucleotide-binding</keyword>
<keyword id="KW-0548">Nucleotidyltransferase</keyword>
<keyword id="KW-1185">Reference proteome</keyword>
<keyword id="KW-0808">Transferase</keyword>